<evidence type="ECO:0000269" key="1">
    <source ref="4"/>
</evidence>
<evidence type="ECO:0000305" key="2"/>
<sequence length="154" mass="16424">GVQKTEVEATSTVPAQKLYAGLLLDIDDILPKAFPQAIKSSEIIEGDGGVGTVKLVTLGEASQFNTMKQRIDAIDKDALTYTYSIIGGDILLDIIESIVNHFTIVPTPDGGSIVKNTTIYNTIGDAVIPEENIKDATEKAGLIFKAVEAYLLAN</sequence>
<organism>
    <name type="scientific">Panax ginseng</name>
    <name type="common">Korean ginseng</name>
    <dbReference type="NCBI Taxonomy" id="4054"/>
    <lineage>
        <taxon>Eukaryota</taxon>
        <taxon>Viridiplantae</taxon>
        <taxon>Streptophyta</taxon>
        <taxon>Embryophyta</taxon>
        <taxon>Tracheophyta</taxon>
        <taxon>Spermatophyta</taxon>
        <taxon>Magnoliopsida</taxon>
        <taxon>eudicotyledons</taxon>
        <taxon>Gunneridae</taxon>
        <taxon>Pentapetalae</taxon>
        <taxon>asterids</taxon>
        <taxon>campanulids</taxon>
        <taxon>Apiales</taxon>
        <taxon>Araliaceae</taxon>
        <taxon>Panax</taxon>
    </lineage>
</organism>
<keyword id="KW-0963">Cytoplasm</keyword>
<keyword id="KW-0903">Direct protein sequencing</keyword>
<keyword id="KW-0255">Endonuclease</keyword>
<keyword id="KW-0378">Hydrolase</keyword>
<keyword id="KW-0540">Nuclease</keyword>
<keyword id="KW-0568">Pathogenesis-related protein</keyword>
<keyword id="KW-0611">Plant defense</keyword>
<proteinExistence type="evidence at protein level"/>
<protein>
    <recommendedName>
        <fullName>Ribonuclease 1</fullName>
        <ecNumber>3.1.-.-</ecNumber>
    </recommendedName>
</protein>
<reference key="1">
    <citation type="journal article" date="1997" name="FEBS Lett.">
        <title>Primary structures of two ribonucleases from ginseng calluses. New members of the PR-10 family of intracellular pathogenesis-related plant proteins.</title>
        <authorList>
            <person name="Moiseyev G.P."/>
            <person name="Fedoreyeva L.I."/>
            <person name="Zhuravlev Y.N."/>
            <person name="Yasnetskaya E.G."/>
            <person name="Jekel P.A."/>
            <person name="Beintema J.J."/>
        </authorList>
    </citation>
    <scope>PROTEIN SEQUENCE</scope>
    <source>
        <strain>cv. R1</strain>
        <tissue>Callus</tissue>
    </source>
</reference>
<reference key="2">
    <citation type="journal article" date="1994" name="Planta">
        <title>High sequence similarity between a ribonuclease from ginseng calluses and fungus-elicited proteins from parsley indicates that intracellular pathogenesis-related proteins are ribonucleases.</title>
        <authorList>
            <person name="Moiseyev G.P."/>
            <person name="Beintema J.J."/>
            <person name="Fedoreyeva L.I."/>
            <person name="Yakovlev G.I."/>
        </authorList>
    </citation>
    <scope>PROTEIN SEQUENCE OF 1-20 AND 68-87</scope>
</reference>
<reference key="3">
    <citation type="journal article" date="2002" name="Proteomics">
        <title>Proteome of oriental ginseng Panax ginseng C. A. Meyer and the potential to use it as an identification tool.</title>
        <authorList>
            <person name="Lum J.H.-K."/>
            <person name="Fung K.-L."/>
            <person name="Cheung P.-Y."/>
            <person name="Wong M.-S."/>
            <person name="Lee C.-H."/>
            <person name="Kwok F.S.-L."/>
            <person name="Leung M.C.-P."/>
            <person name="Hui P.-K."/>
            <person name="Lo S.C.-L."/>
        </authorList>
    </citation>
    <scope>PROTEIN SEQUENCE OF 7-22</scope>
    <source>
        <tissue>Root</tissue>
    </source>
</reference>
<reference key="4">
    <citation type="journal article" date="2003" name="Russ. J. Plant Physiol.">
        <title>Ethephon- and jasmonate-elicited pathogenesis-related ribonucleases in cultured ginseng cells.</title>
        <authorList>
            <person name="Yasnetskaya E.G."/>
            <person name="Bulgakov V.P."/>
            <person name="Gorbach V.I."/>
            <person name="Shevchenko N.M."/>
            <person name="Fedoreyeva L.I."/>
            <person name="Zhuravlev Y.N."/>
            <person name="Kiselev K.V."/>
        </authorList>
    </citation>
    <scope>FUNCTION</scope>
    <scope>CATALYTIC ACTIVITY</scope>
    <scope>INDUCTION</scope>
</reference>
<name>RNS1_PANGI</name>
<feature type="chain" id="PRO_0000154155" description="Ribonuclease 1">
    <location>
        <begin position="1"/>
        <end position="154"/>
    </location>
</feature>
<comment type="function">
    <text evidence="1">Catalyzes the two-stage endonucleolytic cleavage to 3'-phosphomononucleotides and 3'-phosphooligonucleotides with 2',3'-cyclic phosphate intermediates.</text>
</comment>
<comment type="subcellular location">
    <subcellularLocation>
        <location evidence="2">Cytoplasm</location>
    </subcellularLocation>
</comment>
<comment type="induction">
    <text evidence="1">By ethephon and jasmonic acid.</text>
</comment>
<comment type="similarity">
    <text evidence="2">Belongs to the BetVI family.</text>
</comment>
<accession>P80889</accession>
<accession>Q9S9I2</accession>
<dbReference type="EC" id="3.1.-.-"/>
<dbReference type="SMR" id="P80889"/>
<dbReference type="Allergome" id="10131">
    <property type="allergen name" value="Pan g 1"/>
</dbReference>
<dbReference type="GO" id="GO:0005737">
    <property type="term" value="C:cytoplasm"/>
    <property type="evidence" value="ECO:0007669"/>
    <property type="project" value="UniProtKB-SubCell"/>
</dbReference>
<dbReference type="GO" id="GO:0005634">
    <property type="term" value="C:nucleus"/>
    <property type="evidence" value="ECO:0007669"/>
    <property type="project" value="TreeGrafter"/>
</dbReference>
<dbReference type="GO" id="GO:0010427">
    <property type="term" value="F:abscisic acid binding"/>
    <property type="evidence" value="ECO:0007669"/>
    <property type="project" value="InterPro"/>
</dbReference>
<dbReference type="GO" id="GO:0004519">
    <property type="term" value="F:endonuclease activity"/>
    <property type="evidence" value="ECO:0007669"/>
    <property type="project" value="UniProtKB-KW"/>
</dbReference>
<dbReference type="GO" id="GO:0004864">
    <property type="term" value="F:protein phosphatase inhibitor activity"/>
    <property type="evidence" value="ECO:0007669"/>
    <property type="project" value="InterPro"/>
</dbReference>
<dbReference type="GO" id="GO:0038023">
    <property type="term" value="F:signaling receptor activity"/>
    <property type="evidence" value="ECO:0007669"/>
    <property type="project" value="InterPro"/>
</dbReference>
<dbReference type="GO" id="GO:0009738">
    <property type="term" value="P:abscisic acid-activated signaling pathway"/>
    <property type="evidence" value="ECO:0007669"/>
    <property type="project" value="InterPro"/>
</dbReference>
<dbReference type="GO" id="GO:0006952">
    <property type="term" value="P:defense response"/>
    <property type="evidence" value="ECO:0007669"/>
    <property type="project" value="UniProtKB-KW"/>
</dbReference>
<dbReference type="CDD" id="cd07816">
    <property type="entry name" value="Bet_v1-like"/>
    <property type="match status" value="1"/>
</dbReference>
<dbReference type="FunFam" id="3.30.530.20:FF:000007">
    <property type="entry name" value="Major pollen allergen Bet v 1-A"/>
    <property type="match status" value="1"/>
</dbReference>
<dbReference type="Gene3D" id="3.30.530.20">
    <property type="match status" value="1"/>
</dbReference>
<dbReference type="InterPro" id="IPR000916">
    <property type="entry name" value="Bet_v_I/MLP"/>
</dbReference>
<dbReference type="InterPro" id="IPR024949">
    <property type="entry name" value="Bet_v_I_allergen"/>
</dbReference>
<dbReference type="InterPro" id="IPR050279">
    <property type="entry name" value="Plant_def-hormone_signal"/>
</dbReference>
<dbReference type="InterPro" id="IPR023393">
    <property type="entry name" value="START-like_dom_sf"/>
</dbReference>
<dbReference type="PANTHER" id="PTHR31213">
    <property type="entry name" value="OS08G0374000 PROTEIN-RELATED"/>
    <property type="match status" value="1"/>
</dbReference>
<dbReference type="PANTHER" id="PTHR31213:SF55">
    <property type="entry name" value="STRESS-INDUCED PROTEIN SAM22"/>
    <property type="match status" value="1"/>
</dbReference>
<dbReference type="Pfam" id="PF00407">
    <property type="entry name" value="Bet_v_1"/>
    <property type="match status" value="1"/>
</dbReference>
<dbReference type="PRINTS" id="PR00634">
    <property type="entry name" value="BETALLERGEN"/>
</dbReference>
<dbReference type="SMART" id="SM01037">
    <property type="entry name" value="Bet_v_1"/>
    <property type="match status" value="1"/>
</dbReference>
<dbReference type="SUPFAM" id="SSF55961">
    <property type="entry name" value="Bet v1-like"/>
    <property type="match status" value="1"/>
</dbReference>
<dbReference type="PROSITE" id="PS00451">
    <property type="entry name" value="PATHOGENESIS_BETVI"/>
    <property type="match status" value="1"/>
</dbReference>